<accession>P58019</accession>
<accession>Q920G7</accession>
<reference key="1">
    <citation type="journal article" date="2000" name="J. Immunol.">
        <title>Identification and functional characterization of a new gene encoding the mouse terminal complement inhibitor CD59.</title>
        <authorList>
            <person name="Qian Y.-M."/>
            <person name="Qin X."/>
            <person name="Miwa T."/>
            <person name="Sun X."/>
            <person name="Halperin J.A."/>
            <person name="Song W.-C."/>
        </authorList>
    </citation>
    <scope>NUCLEOTIDE SEQUENCE</scope>
    <scope>TISSUE SPECIFICITY</scope>
    <source>
        <strain>129/Sv</strain>
    </source>
</reference>
<reference key="2">
    <citation type="journal article" date="2001" name="Mamm. Genome">
        <title>Genomic structure, functional comparison, and tissue distribution of mouse Cd59a and Cd59b.</title>
        <authorList>
            <person name="Qin X."/>
            <person name="Miwa T."/>
            <person name="Aktas H."/>
            <person name="Gao M."/>
            <person name="Lee C."/>
            <person name="Qian Y.M."/>
            <person name="Morton C.C."/>
            <person name="Shahsafaei A."/>
            <person name="Song W.C."/>
            <person name="Halperin J.A."/>
        </authorList>
    </citation>
    <scope>NUCLEOTIDE SEQUENCE [GENOMIC DNA]</scope>
    <scope>TISSUE SPECIFICITY</scope>
    <source>
        <strain>129/Sv</strain>
    </source>
</reference>
<reference key="3">
    <citation type="journal article" date="2009" name="PLoS Biol.">
        <title>Lineage-specific biology revealed by a finished genome assembly of the mouse.</title>
        <authorList>
            <person name="Church D.M."/>
            <person name="Goodstadt L."/>
            <person name="Hillier L.W."/>
            <person name="Zody M.C."/>
            <person name="Goldstein S."/>
            <person name="She X."/>
            <person name="Bult C.J."/>
            <person name="Agarwala R."/>
            <person name="Cherry J.L."/>
            <person name="DiCuccio M."/>
            <person name="Hlavina W."/>
            <person name="Kapustin Y."/>
            <person name="Meric P."/>
            <person name="Maglott D."/>
            <person name="Birtle Z."/>
            <person name="Marques A.C."/>
            <person name="Graves T."/>
            <person name="Zhou S."/>
            <person name="Teague B."/>
            <person name="Potamousis K."/>
            <person name="Churas C."/>
            <person name="Place M."/>
            <person name="Herschleb J."/>
            <person name="Runnheim R."/>
            <person name="Forrest D."/>
            <person name="Amos-Landgraf J."/>
            <person name="Schwartz D.C."/>
            <person name="Cheng Z."/>
            <person name="Lindblad-Toh K."/>
            <person name="Eichler E.E."/>
            <person name="Ponting C.P."/>
        </authorList>
    </citation>
    <scope>NUCLEOTIDE SEQUENCE [LARGE SCALE GENOMIC DNA]</scope>
    <source>
        <strain>C57BL/6J</strain>
    </source>
</reference>
<reference key="4">
    <citation type="journal article" date="2004" name="Genome Res.">
        <title>The status, quality, and expansion of the NIH full-length cDNA project: the Mammalian Gene Collection (MGC).</title>
        <authorList>
            <consortium name="The MGC Project Team"/>
        </authorList>
    </citation>
    <scope>NUCLEOTIDE SEQUENCE [LARGE SCALE MRNA]</scope>
    <source>
        <tissue>Brain</tissue>
    </source>
</reference>
<sequence length="129" mass="14227">MRAQRGLILLLLLLAVFCSTAVSLKCYNCLDPVSSCKINTTCSPNLDSCLYAVAGRQVYQQCWKLSDCNSNYIMSRLDVAGIQSKCCQWDLCNKNLDGLEEPNNAETSSLRKTALLGTSVLVAILKFCF</sequence>
<keyword id="KW-1003">Cell membrane</keyword>
<keyword id="KW-1015">Disulfide bond</keyword>
<keyword id="KW-0325">Glycoprotein</keyword>
<keyword id="KW-0336">GPI-anchor</keyword>
<keyword id="KW-0449">Lipoprotein</keyword>
<keyword id="KW-0472">Membrane</keyword>
<keyword id="KW-1185">Reference proteome</keyword>
<keyword id="KW-0964">Secreted</keyword>
<keyword id="KW-0732">Signal</keyword>
<gene>
    <name evidence="5 7" type="primary">Cd59b</name>
</gene>
<name>CD59B_MOUSE</name>
<proteinExistence type="evidence at transcript level"/>
<feature type="signal peptide" evidence="2">
    <location>
        <begin position="1"/>
        <end position="23"/>
    </location>
</feature>
<feature type="chain" id="PRO_0000036114" description="CD59B glycoprotein">
    <location>
        <begin position="24"/>
        <end position="104"/>
    </location>
</feature>
<feature type="propeptide" id="PRO_0000036115" description="Removed in mature form" evidence="1">
    <location>
        <begin position="105"/>
        <end position="129"/>
    </location>
</feature>
<feature type="domain" description="UPAR/Ly6">
    <location>
        <begin position="24"/>
        <end position="107"/>
    </location>
</feature>
<feature type="lipid moiety-binding region" description="GPI-anchor amidated asparagine" evidence="1">
    <location>
        <position position="104"/>
    </location>
</feature>
<feature type="glycosylation site" description="N-linked (GlcNAc...) asparagine" evidence="2">
    <location>
        <position position="39"/>
    </location>
</feature>
<feature type="disulfide bond" evidence="1">
    <location>
        <begin position="26"/>
        <end position="49"/>
    </location>
</feature>
<feature type="disulfide bond" evidence="1">
    <location>
        <begin position="29"/>
        <end position="36"/>
    </location>
</feature>
<feature type="disulfide bond" evidence="1">
    <location>
        <begin position="42"/>
        <end position="62"/>
    </location>
</feature>
<feature type="disulfide bond" evidence="1">
    <location>
        <begin position="68"/>
        <end position="86"/>
    </location>
</feature>
<feature type="disulfide bond" evidence="1">
    <location>
        <begin position="87"/>
        <end position="92"/>
    </location>
</feature>
<feature type="sequence conflict" description="In Ref. 1; no nucleotide entry." evidence="6" ref="1">
    <original>LDP</original>
    <variation>FQF</variation>
    <location>
        <begin position="30"/>
        <end position="32"/>
    </location>
</feature>
<feature type="sequence conflict" description="In Ref. 1; no nucleotide entry." evidence="6" ref="1">
    <original>D</original>
    <variation>G</variation>
    <location>
        <position position="90"/>
    </location>
</feature>
<evidence type="ECO:0000250" key="1">
    <source>
        <dbReference type="UniProtKB" id="P13987"/>
    </source>
</evidence>
<evidence type="ECO:0000255" key="2"/>
<evidence type="ECO:0000269" key="3">
    <source>
    </source>
</evidence>
<evidence type="ECO:0000269" key="4">
    <source>
    </source>
</evidence>
<evidence type="ECO:0000303" key="5">
    <source>
    </source>
</evidence>
<evidence type="ECO:0000305" key="6"/>
<evidence type="ECO:0000312" key="7">
    <source>
        <dbReference type="MGI" id="MGI:1888996"/>
    </source>
</evidence>
<dbReference type="EMBL" id="AF292401">
    <property type="protein sequence ID" value="AAL04434.1"/>
    <property type="molecule type" value="Genomic_DNA"/>
</dbReference>
<dbReference type="EMBL" id="BX640578">
    <property type="status" value="NOT_ANNOTATED_CDS"/>
    <property type="molecule type" value="Genomic_DNA"/>
</dbReference>
<dbReference type="EMBL" id="BX813317">
    <property type="status" value="NOT_ANNOTATED_CDS"/>
    <property type="molecule type" value="Genomic_DNA"/>
</dbReference>
<dbReference type="EMBL" id="BC139203">
    <property type="protein sequence ID" value="AAI39204.1"/>
    <property type="molecule type" value="mRNA"/>
</dbReference>
<dbReference type="EMBL" id="BC145912">
    <property type="protein sequence ID" value="AAI45913.1"/>
    <property type="molecule type" value="mRNA"/>
</dbReference>
<dbReference type="EMBL" id="BC171969">
    <property type="protein sequence ID" value="AAI71969.1"/>
    <property type="molecule type" value="mRNA"/>
</dbReference>
<dbReference type="CCDS" id="CCDS16486.1"/>
<dbReference type="RefSeq" id="NP_001355144.1">
    <property type="nucleotide sequence ID" value="NM_001368215.1"/>
</dbReference>
<dbReference type="RefSeq" id="NP_862906.1">
    <property type="nucleotide sequence ID" value="NM_181858.2"/>
</dbReference>
<dbReference type="RefSeq" id="XP_006499865.1">
    <property type="nucleotide sequence ID" value="XM_006499802.5"/>
</dbReference>
<dbReference type="RefSeq" id="XP_006499866.1">
    <property type="nucleotide sequence ID" value="XM_006499803.4"/>
</dbReference>
<dbReference type="RefSeq" id="XP_006499867.1">
    <property type="nucleotide sequence ID" value="XM_006499804.2"/>
</dbReference>
<dbReference type="RefSeq" id="XP_006499868.1">
    <property type="nucleotide sequence ID" value="XM_006499805.2"/>
</dbReference>
<dbReference type="SMR" id="P58019"/>
<dbReference type="FunCoup" id="P58019">
    <property type="interactions" value="249"/>
</dbReference>
<dbReference type="STRING" id="10090.ENSMUSP00000087912"/>
<dbReference type="GlyCosmos" id="P58019">
    <property type="glycosylation" value="1 site, No reported glycans"/>
</dbReference>
<dbReference type="GlyGen" id="P58019">
    <property type="glycosylation" value="1 site, 1 N-linked glycan (1 site)"/>
</dbReference>
<dbReference type="PhosphoSitePlus" id="P58019"/>
<dbReference type="PaxDb" id="10090-ENSMUSP00000087912"/>
<dbReference type="ProteomicsDB" id="280025"/>
<dbReference type="DNASU" id="333883"/>
<dbReference type="Ensembl" id="ENSMUST00000090429.8">
    <property type="protein sequence ID" value="ENSMUSP00000087912.2"/>
    <property type="gene ID" value="ENSMUSG00000068686.14"/>
</dbReference>
<dbReference type="Ensembl" id="ENSMUST00000111130.3">
    <property type="protein sequence ID" value="ENSMUSP00000106760.3"/>
    <property type="gene ID" value="ENSMUSG00000068686.14"/>
</dbReference>
<dbReference type="Ensembl" id="ENSMUST00000129749.9">
    <property type="protein sequence ID" value="ENSMUSP00000117553.2"/>
    <property type="gene ID" value="ENSMUSG00000068686.14"/>
</dbReference>
<dbReference type="GeneID" id="333883"/>
<dbReference type="KEGG" id="mmu:333883"/>
<dbReference type="UCSC" id="uc008ljn.1">
    <property type="organism name" value="mouse"/>
</dbReference>
<dbReference type="AGR" id="MGI:1888996"/>
<dbReference type="CTD" id="333883"/>
<dbReference type="MGI" id="MGI:1888996">
    <property type="gene designation" value="Cd59b"/>
</dbReference>
<dbReference type="VEuPathDB" id="HostDB:ENSMUSG00000068686"/>
<dbReference type="eggNOG" id="ENOG502SA4P">
    <property type="taxonomic scope" value="Eukaryota"/>
</dbReference>
<dbReference type="GeneTree" id="ENSGT00390000016309"/>
<dbReference type="HOGENOM" id="CLU_147732_1_0_1"/>
<dbReference type="InParanoid" id="P58019"/>
<dbReference type="OMA" id="CEYSRLA"/>
<dbReference type="OrthoDB" id="10011411at2759"/>
<dbReference type="PhylomeDB" id="P58019"/>
<dbReference type="TreeFam" id="TF338524"/>
<dbReference type="Reactome" id="R-MMU-204005">
    <property type="pathway name" value="COPII-mediated vesicle transport"/>
</dbReference>
<dbReference type="Reactome" id="R-MMU-5694530">
    <property type="pathway name" value="Cargo concentration in the ER"/>
</dbReference>
<dbReference type="Reactome" id="R-MMU-6798695">
    <property type="pathway name" value="Neutrophil degranulation"/>
</dbReference>
<dbReference type="Reactome" id="R-MMU-6807878">
    <property type="pathway name" value="COPI-mediated anterograde transport"/>
</dbReference>
<dbReference type="Reactome" id="R-MMU-977606">
    <property type="pathway name" value="Regulation of Complement cascade"/>
</dbReference>
<dbReference type="BioGRID-ORCS" id="333883">
    <property type="hits" value="1 hit in 75 CRISPR screens"/>
</dbReference>
<dbReference type="ChiTaRS" id="Cd59b">
    <property type="organism name" value="mouse"/>
</dbReference>
<dbReference type="PRO" id="PR:P58019"/>
<dbReference type="Proteomes" id="UP000000589">
    <property type="component" value="Chromosome 2"/>
</dbReference>
<dbReference type="RNAct" id="P58019">
    <property type="molecule type" value="protein"/>
</dbReference>
<dbReference type="Bgee" id="ENSMUSG00000068686">
    <property type="expression patterns" value="Expressed in brown adipose tissue and 97 other cell types or tissues"/>
</dbReference>
<dbReference type="ExpressionAtlas" id="P58019">
    <property type="expression patterns" value="baseline and differential"/>
</dbReference>
<dbReference type="GO" id="GO:0009986">
    <property type="term" value="C:cell surface"/>
    <property type="evidence" value="ECO:0000314"/>
    <property type="project" value="MGI"/>
</dbReference>
<dbReference type="GO" id="GO:0009897">
    <property type="term" value="C:external side of plasma membrane"/>
    <property type="evidence" value="ECO:0000266"/>
    <property type="project" value="MGI"/>
</dbReference>
<dbReference type="GO" id="GO:0005886">
    <property type="term" value="C:plasma membrane"/>
    <property type="evidence" value="ECO:0000314"/>
    <property type="project" value="MGI"/>
</dbReference>
<dbReference type="GO" id="GO:0001971">
    <property type="term" value="P:negative regulation of activation of membrane attack complex"/>
    <property type="evidence" value="ECO:0000314"/>
    <property type="project" value="MGI"/>
</dbReference>
<dbReference type="GO" id="GO:0045916">
    <property type="term" value="P:negative regulation of complement activation"/>
    <property type="evidence" value="ECO:0000314"/>
    <property type="project" value="MGI"/>
</dbReference>
<dbReference type="CDD" id="cd23554">
    <property type="entry name" value="TFP_LU_ECD_CD59"/>
    <property type="match status" value="1"/>
</dbReference>
<dbReference type="FunFam" id="2.10.60.10:FF:000023">
    <property type="entry name" value="CD59 glycoprotein preproprotein"/>
    <property type="match status" value="1"/>
</dbReference>
<dbReference type="Gene3D" id="2.10.60.10">
    <property type="entry name" value="CD59"/>
    <property type="match status" value="1"/>
</dbReference>
<dbReference type="InterPro" id="IPR056949">
    <property type="entry name" value="CD59"/>
</dbReference>
<dbReference type="InterPro" id="IPR016054">
    <property type="entry name" value="LY6_UPA_recep-like"/>
</dbReference>
<dbReference type="InterPro" id="IPR045860">
    <property type="entry name" value="Snake_toxin-like_sf"/>
</dbReference>
<dbReference type="PANTHER" id="PTHR10036">
    <property type="entry name" value="CD59 GLYCOPROTEIN"/>
    <property type="match status" value="1"/>
</dbReference>
<dbReference type="PANTHER" id="PTHR10036:SF24">
    <property type="entry name" value="CD59 GLYCOPROTEIN"/>
    <property type="match status" value="1"/>
</dbReference>
<dbReference type="Pfam" id="PF25152">
    <property type="entry name" value="CD59"/>
    <property type="match status" value="1"/>
</dbReference>
<dbReference type="SMART" id="SM00134">
    <property type="entry name" value="LU"/>
    <property type="match status" value="1"/>
</dbReference>
<dbReference type="SUPFAM" id="SSF57302">
    <property type="entry name" value="Snake toxin-like"/>
    <property type="match status" value="1"/>
</dbReference>
<protein>
    <recommendedName>
        <fullName>CD59B glycoprotein</fullName>
    </recommendedName>
    <alternativeName>
        <fullName>MAC-inhibitory protein</fullName>
        <shortName>MAC-IP</shortName>
    </alternativeName>
    <alternativeName>
        <fullName>Membrane attack complex inhibition factor</fullName>
        <shortName>MACIF</shortName>
    </alternativeName>
    <alternativeName>
        <fullName>Protectin</fullName>
    </alternativeName>
    <cdAntigenName>CD59</cdAntigenName>
</protein>
<comment type="function">
    <text evidence="1">Potent inhibitor of the complement membrane attack complex (MAC) action, which protects self-cells from damage during complement activation. Acts by binding to the beta-haipins of C8 (C8A and C8B) components of the assembling MAC, forming an intermolecular beta-sheet that prevents incorporation of the multiple copies of C9 required for complete formation of the osmolytic pore.</text>
</comment>
<comment type="subunit">
    <text evidence="1">Interacts with T-cell surface antigen CD2.</text>
</comment>
<comment type="subcellular location">
    <subcellularLocation>
        <location evidence="1">Cell membrane</location>
        <topology evidence="1">Lipid-anchor</topology>
        <topology evidence="1">GPI-anchor</topology>
    </subcellularLocation>
    <subcellularLocation>
        <location evidence="1">Secreted</location>
    </subcellularLocation>
    <text evidence="1">Localizes to the cell surface. Soluble form found in a number of tissues.</text>
</comment>
<comment type="tissue specificity">
    <text evidence="3 4">Widely expressed in the kidneys, brain, lungs, spleen and testis (PubMed:11471050) Testis-specific (PubMed:10946279).</text>
</comment>
<comment type="PTM">
    <text evidence="1">N- and O-glycosylated.</text>
</comment>
<organism>
    <name type="scientific">Mus musculus</name>
    <name type="common">Mouse</name>
    <dbReference type="NCBI Taxonomy" id="10090"/>
    <lineage>
        <taxon>Eukaryota</taxon>
        <taxon>Metazoa</taxon>
        <taxon>Chordata</taxon>
        <taxon>Craniata</taxon>
        <taxon>Vertebrata</taxon>
        <taxon>Euteleostomi</taxon>
        <taxon>Mammalia</taxon>
        <taxon>Eutheria</taxon>
        <taxon>Euarchontoglires</taxon>
        <taxon>Glires</taxon>
        <taxon>Rodentia</taxon>
        <taxon>Myomorpha</taxon>
        <taxon>Muroidea</taxon>
        <taxon>Muridae</taxon>
        <taxon>Murinae</taxon>
        <taxon>Mus</taxon>
        <taxon>Mus</taxon>
    </lineage>
</organism>